<evidence type="ECO:0000255" key="1">
    <source>
        <dbReference type="HAMAP-Rule" id="MF_00564"/>
    </source>
</evidence>
<keyword id="KW-0548">Nucleotidyltransferase</keyword>
<keyword id="KW-0694">RNA-binding</keyword>
<keyword id="KW-0698">rRNA processing</keyword>
<keyword id="KW-0808">Transferase</keyword>
<keyword id="KW-0819">tRNA processing</keyword>
<keyword id="KW-0820">tRNA-binding</keyword>
<organism>
    <name type="scientific">Salmonella agona (strain SL483)</name>
    <dbReference type="NCBI Taxonomy" id="454166"/>
    <lineage>
        <taxon>Bacteria</taxon>
        <taxon>Pseudomonadati</taxon>
        <taxon>Pseudomonadota</taxon>
        <taxon>Gammaproteobacteria</taxon>
        <taxon>Enterobacterales</taxon>
        <taxon>Enterobacteriaceae</taxon>
        <taxon>Salmonella</taxon>
    </lineage>
</organism>
<comment type="function">
    <text evidence="1">Phosphorolytic 3'-5' exoribonuclease that plays an important role in tRNA 3'-end maturation. Removes nucleotide residues following the 3'-CCA terminus of tRNAs; can also add nucleotides to the ends of RNA molecules by using nucleoside diphosphates as substrates, but this may not be physiologically important. Probably plays a role in initiation of 16S rRNA degradation (leading to ribosome degradation) during starvation.</text>
</comment>
<comment type="catalytic activity">
    <reaction evidence="1">
        <text>tRNA(n+1) + phosphate = tRNA(n) + a ribonucleoside 5'-diphosphate</text>
        <dbReference type="Rhea" id="RHEA:10628"/>
        <dbReference type="Rhea" id="RHEA-COMP:17343"/>
        <dbReference type="Rhea" id="RHEA-COMP:17344"/>
        <dbReference type="ChEBI" id="CHEBI:43474"/>
        <dbReference type="ChEBI" id="CHEBI:57930"/>
        <dbReference type="ChEBI" id="CHEBI:173114"/>
        <dbReference type="EC" id="2.7.7.56"/>
    </reaction>
</comment>
<comment type="subunit">
    <text evidence="1">Homohexameric ring arranged as a trimer of dimers.</text>
</comment>
<comment type="similarity">
    <text evidence="1">Belongs to the RNase PH family.</text>
</comment>
<sequence length="238" mass="25269">MRPAGRSANQVRPVTLTRNYTKHAEGSVLVEFGDTKVLCTASIEEGVPRFLKGQGQGWITAEYGMLPRATHTRNAREAAKGKQGGRTMEIQRLIARALRAAVDLKTLGEFTITLDCDVIQADGGTRTASITGACVALADALNKLVANGKLKTNPMKGMVAAVSVGIVNGEAICDLEYVEDSAAETDMNVVMTEDGRIIEVQGTAEGEPFSHEELLTLLALARGGIESIVATQKAALEN</sequence>
<reference key="1">
    <citation type="journal article" date="2011" name="J. Bacteriol.">
        <title>Comparative genomics of 28 Salmonella enterica isolates: evidence for CRISPR-mediated adaptive sublineage evolution.</title>
        <authorList>
            <person name="Fricke W.F."/>
            <person name="Mammel M.K."/>
            <person name="McDermott P.F."/>
            <person name="Tartera C."/>
            <person name="White D.G."/>
            <person name="Leclerc J.E."/>
            <person name="Ravel J."/>
            <person name="Cebula T.A."/>
        </authorList>
    </citation>
    <scope>NUCLEOTIDE SEQUENCE [LARGE SCALE GENOMIC DNA]</scope>
    <source>
        <strain>SL483</strain>
    </source>
</reference>
<gene>
    <name evidence="1" type="primary">rph</name>
    <name type="ordered locus">SeAg_B3951</name>
</gene>
<accession>B5EXE7</accession>
<feature type="chain" id="PRO_1000129365" description="Ribonuclease PH">
    <location>
        <begin position="1"/>
        <end position="238"/>
    </location>
</feature>
<feature type="binding site" evidence="1">
    <location>
        <position position="86"/>
    </location>
    <ligand>
        <name>phosphate</name>
        <dbReference type="ChEBI" id="CHEBI:43474"/>
        <note>substrate</note>
    </ligand>
</feature>
<feature type="binding site" evidence="1">
    <location>
        <begin position="124"/>
        <end position="126"/>
    </location>
    <ligand>
        <name>phosphate</name>
        <dbReference type="ChEBI" id="CHEBI:43474"/>
        <note>substrate</note>
    </ligand>
</feature>
<proteinExistence type="inferred from homology"/>
<dbReference type="EC" id="2.7.7.56" evidence="1"/>
<dbReference type="EMBL" id="CP001138">
    <property type="protein sequence ID" value="ACH50780.1"/>
    <property type="molecule type" value="Genomic_DNA"/>
</dbReference>
<dbReference type="RefSeq" id="WP_001247078.1">
    <property type="nucleotide sequence ID" value="NC_011149.1"/>
</dbReference>
<dbReference type="SMR" id="B5EXE7"/>
<dbReference type="KEGG" id="sea:SeAg_B3951"/>
<dbReference type="HOGENOM" id="CLU_050858_0_0_6"/>
<dbReference type="Proteomes" id="UP000008819">
    <property type="component" value="Chromosome"/>
</dbReference>
<dbReference type="GO" id="GO:0000175">
    <property type="term" value="F:3'-5'-RNA exonuclease activity"/>
    <property type="evidence" value="ECO:0007669"/>
    <property type="project" value="UniProtKB-UniRule"/>
</dbReference>
<dbReference type="GO" id="GO:0000049">
    <property type="term" value="F:tRNA binding"/>
    <property type="evidence" value="ECO:0007669"/>
    <property type="project" value="UniProtKB-UniRule"/>
</dbReference>
<dbReference type="GO" id="GO:0009022">
    <property type="term" value="F:tRNA nucleotidyltransferase activity"/>
    <property type="evidence" value="ECO:0007669"/>
    <property type="project" value="UniProtKB-UniRule"/>
</dbReference>
<dbReference type="GO" id="GO:0016075">
    <property type="term" value="P:rRNA catabolic process"/>
    <property type="evidence" value="ECO:0007669"/>
    <property type="project" value="UniProtKB-UniRule"/>
</dbReference>
<dbReference type="GO" id="GO:0006364">
    <property type="term" value="P:rRNA processing"/>
    <property type="evidence" value="ECO:0007669"/>
    <property type="project" value="UniProtKB-KW"/>
</dbReference>
<dbReference type="GO" id="GO:0008033">
    <property type="term" value="P:tRNA processing"/>
    <property type="evidence" value="ECO:0007669"/>
    <property type="project" value="UniProtKB-UniRule"/>
</dbReference>
<dbReference type="CDD" id="cd11362">
    <property type="entry name" value="RNase_PH_bact"/>
    <property type="match status" value="1"/>
</dbReference>
<dbReference type="FunFam" id="3.30.230.70:FF:000003">
    <property type="entry name" value="Ribonuclease PH"/>
    <property type="match status" value="1"/>
</dbReference>
<dbReference type="Gene3D" id="3.30.230.70">
    <property type="entry name" value="GHMP Kinase, N-terminal domain"/>
    <property type="match status" value="1"/>
</dbReference>
<dbReference type="HAMAP" id="MF_00564">
    <property type="entry name" value="RNase_PH"/>
    <property type="match status" value="1"/>
</dbReference>
<dbReference type="InterPro" id="IPR001247">
    <property type="entry name" value="ExoRNase_PH_dom1"/>
</dbReference>
<dbReference type="InterPro" id="IPR015847">
    <property type="entry name" value="ExoRNase_PH_dom2"/>
</dbReference>
<dbReference type="InterPro" id="IPR036345">
    <property type="entry name" value="ExoRNase_PH_dom2_sf"/>
</dbReference>
<dbReference type="InterPro" id="IPR027408">
    <property type="entry name" value="PNPase/RNase_PH_dom_sf"/>
</dbReference>
<dbReference type="InterPro" id="IPR020568">
    <property type="entry name" value="Ribosomal_Su5_D2-typ_SF"/>
</dbReference>
<dbReference type="InterPro" id="IPR050080">
    <property type="entry name" value="RNase_PH"/>
</dbReference>
<dbReference type="InterPro" id="IPR002381">
    <property type="entry name" value="RNase_PH_bac-type"/>
</dbReference>
<dbReference type="InterPro" id="IPR018336">
    <property type="entry name" value="RNase_PH_CS"/>
</dbReference>
<dbReference type="NCBIfam" id="TIGR01966">
    <property type="entry name" value="RNasePH"/>
    <property type="match status" value="1"/>
</dbReference>
<dbReference type="PANTHER" id="PTHR11953">
    <property type="entry name" value="EXOSOME COMPLEX COMPONENT"/>
    <property type="match status" value="1"/>
</dbReference>
<dbReference type="PANTHER" id="PTHR11953:SF0">
    <property type="entry name" value="EXOSOME COMPLEX COMPONENT RRP41"/>
    <property type="match status" value="1"/>
</dbReference>
<dbReference type="Pfam" id="PF01138">
    <property type="entry name" value="RNase_PH"/>
    <property type="match status" value="1"/>
</dbReference>
<dbReference type="Pfam" id="PF03725">
    <property type="entry name" value="RNase_PH_C"/>
    <property type="match status" value="1"/>
</dbReference>
<dbReference type="SUPFAM" id="SSF55666">
    <property type="entry name" value="Ribonuclease PH domain 2-like"/>
    <property type="match status" value="1"/>
</dbReference>
<dbReference type="SUPFAM" id="SSF54211">
    <property type="entry name" value="Ribosomal protein S5 domain 2-like"/>
    <property type="match status" value="1"/>
</dbReference>
<dbReference type="PROSITE" id="PS01277">
    <property type="entry name" value="RIBONUCLEASE_PH"/>
    <property type="match status" value="1"/>
</dbReference>
<name>RNPH_SALA4</name>
<protein>
    <recommendedName>
        <fullName evidence="1">Ribonuclease PH</fullName>
        <shortName evidence="1">RNase PH</shortName>
        <ecNumber evidence="1">2.7.7.56</ecNumber>
    </recommendedName>
    <alternativeName>
        <fullName evidence="1">tRNA nucleotidyltransferase</fullName>
    </alternativeName>
</protein>